<name>COBS_SHEB9</name>
<sequence>MSERESWHKEIDLFLVAMGYFTRIPMPKWVEVDSDKLNKASRYFGLVGLLVGLLSAIVFWLTQNWLPAGVSVLLAMLVGVLLTGGFHEDGLADTFDGFGGGWTAEDKLRIMKDSRLGSYGALALMLALLLKWQLLVELALYDPVVAGSALIVAHTVSRVVSASIIFSEKYVRDDETSKSKPLSQHQGINELLILIASGVLVLLFLKGLAALSLLLVMIGLRRLIIVIFRRQIGGYTGDTLGAAQQIAEIVCYFVLLVVGNIL</sequence>
<organism>
    <name type="scientific">Shewanella baltica (strain OS195)</name>
    <dbReference type="NCBI Taxonomy" id="399599"/>
    <lineage>
        <taxon>Bacteria</taxon>
        <taxon>Pseudomonadati</taxon>
        <taxon>Pseudomonadota</taxon>
        <taxon>Gammaproteobacteria</taxon>
        <taxon>Alteromonadales</taxon>
        <taxon>Shewanellaceae</taxon>
        <taxon>Shewanella</taxon>
    </lineage>
</organism>
<keyword id="KW-0997">Cell inner membrane</keyword>
<keyword id="KW-1003">Cell membrane</keyword>
<keyword id="KW-0169">Cobalamin biosynthesis</keyword>
<keyword id="KW-0460">Magnesium</keyword>
<keyword id="KW-0472">Membrane</keyword>
<keyword id="KW-0808">Transferase</keyword>
<keyword id="KW-0812">Transmembrane</keyword>
<keyword id="KW-1133">Transmembrane helix</keyword>
<comment type="function">
    <text evidence="1">Joins adenosylcobinamide-GDP and alpha-ribazole to generate adenosylcobalamin (Ado-cobalamin). Also synthesizes adenosylcobalamin 5'-phosphate from adenosylcobinamide-GDP and alpha-ribazole 5'-phosphate.</text>
</comment>
<comment type="catalytic activity">
    <reaction evidence="1">
        <text>alpha-ribazole + adenosylcob(III)inamide-GDP = adenosylcob(III)alamin + GMP + H(+)</text>
        <dbReference type="Rhea" id="RHEA:16049"/>
        <dbReference type="ChEBI" id="CHEBI:10329"/>
        <dbReference type="ChEBI" id="CHEBI:15378"/>
        <dbReference type="ChEBI" id="CHEBI:18408"/>
        <dbReference type="ChEBI" id="CHEBI:58115"/>
        <dbReference type="ChEBI" id="CHEBI:60487"/>
        <dbReference type="EC" id="2.7.8.26"/>
    </reaction>
</comment>
<comment type="catalytic activity">
    <reaction evidence="1">
        <text>alpha-ribazole 5'-phosphate + adenosylcob(III)inamide-GDP = adenosylcob(III)alamin 5'-phosphate + GMP + H(+)</text>
        <dbReference type="Rhea" id="RHEA:23560"/>
        <dbReference type="ChEBI" id="CHEBI:15378"/>
        <dbReference type="ChEBI" id="CHEBI:57918"/>
        <dbReference type="ChEBI" id="CHEBI:58115"/>
        <dbReference type="ChEBI" id="CHEBI:60487"/>
        <dbReference type="ChEBI" id="CHEBI:60493"/>
        <dbReference type="EC" id="2.7.8.26"/>
    </reaction>
</comment>
<comment type="cofactor">
    <cofactor evidence="1">
        <name>Mg(2+)</name>
        <dbReference type="ChEBI" id="CHEBI:18420"/>
    </cofactor>
</comment>
<comment type="pathway">
    <text evidence="1">Cofactor biosynthesis; adenosylcobalamin biosynthesis; adenosylcobalamin from cob(II)yrinate a,c-diamide: step 7/7.</text>
</comment>
<comment type="subcellular location">
    <subcellularLocation>
        <location evidence="1">Cell inner membrane</location>
        <topology evidence="1">Multi-pass membrane protein</topology>
    </subcellularLocation>
</comment>
<comment type="similarity">
    <text evidence="1">Belongs to the CobS family.</text>
</comment>
<reference key="1">
    <citation type="submission" date="2007-11" db="EMBL/GenBank/DDBJ databases">
        <title>Complete sequence of chromosome of Shewanella baltica OS195.</title>
        <authorList>
            <consortium name="US DOE Joint Genome Institute"/>
            <person name="Copeland A."/>
            <person name="Lucas S."/>
            <person name="Lapidus A."/>
            <person name="Barry K."/>
            <person name="Glavina del Rio T."/>
            <person name="Dalin E."/>
            <person name="Tice H."/>
            <person name="Pitluck S."/>
            <person name="Chain P."/>
            <person name="Malfatti S."/>
            <person name="Shin M."/>
            <person name="Vergez L."/>
            <person name="Schmutz J."/>
            <person name="Larimer F."/>
            <person name="Land M."/>
            <person name="Hauser L."/>
            <person name="Kyrpides N."/>
            <person name="Kim E."/>
            <person name="Brettar I."/>
            <person name="Rodrigues J."/>
            <person name="Konstantinidis K."/>
            <person name="Klappenbach J."/>
            <person name="Hofle M."/>
            <person name="Tiedje J."/>
            <person name="Richardson P."/>
        </authorList>
    </citation>
    <scope>NUCLEOTIDE SEQUENCE [LARGE SCALE GENOMIC DNA]</scope>
    <source>
        <strain>OS195</strain>
    </source>
</reference>
<gene>
    <name evidence="1" type="primary">cobS</name>
    <name type="ordered locus">Sbal195_1012</name>
</gene>
<dbReference type="EC" id="2.7.8.26" evidence="1"/>
<dbReference type="EMBL" id="CP000891">
    <property type="protein sequence ID" value="ABX48188.1"/>
    <property type="molecule type" value="Genomic_DNA"/>
</dbReference>
<dbReference type="RefSeq" id="WP_006082834.1">
    <property type="nucleotide sequence ID" value="NC_009997.1"/>
</dbReference>
<dbReference type="KEGG" id="sbn:Sbal195_1012"/>
<dbReference type="HOGENOM" id="CLU_057426_1_1_6"/>
<dbReference type="UniPathway" id="UPA00148">
    <property type="reaction ID" value="UER00238"/>
</dbReference>
<dbReference type="Proteomes" id="UP000000770">
    <property type="component" value="Chromosome"/>
</dbReference>
<dbReference type="GO" id="GO:0005886">
    <property type="term" value="C:plasma membrane"/>
    <property type="evidence" value="ECO:0007669"/>
    <property type="project" value="UniProtKB-SubCell"/>
</dbReference>
<dbReference type="GO" id="GO:0051073">
    <property type="term" value="F:adenosylcobinamide-GDP ribazoletransferase activity"/>
    <property type="evidence" value="ECO:0007669"/>
    <property type="project" value="UniProtKB-UniRule"/>
</dbReference>
<dbReference type="GO" id="GO:0008818">
    <property type="term" value="F:cobalamin 5'-phosphate synthase activity"/>
    <property type="evidence" value="ECO:0007669"/>
    <property type="project" value="UniProtKB-UniRule"/>
</dbReference>
<dbReference type="GO" id="GO:0009236">
    <property type="term" value="P:cobalamin biosynthetic process"/>
    <property type="evidence" value="ECO:0007669"/>
    <property type="project" value="UniProtKB-UniRule"/>
</dbReference>
<dbReference type="HAMAP" id="MF_00719">
    <property type="entry name" value="CobS"/>
    <property type="match status" value="1"/>
</dbReference>
<dbReference type="InterPro" id="IPR003805">
    <property type="entry name" value="CobS"/>
</dbReference>
<dbReference type="NCBIfam" id="TIGR00317">
    <property type="entry name" value="cobS"/>
    <property type="match status" value="1"/>
</dbReference>
<dbReference type="NCBIfam" id="NF001277">
    <property type="entry name" value="PRK00235.1-3"/>
    <property type="match status" value="1"/>
</dbReference>
<dbReference type="PANTHER" id="PTHR34148">
    <property type="entry name" value="ADENOSYLCOBINAMIDE-GDP RIBAZOLETRANSFERASE"/>
    <property type="match status" value="1"/>
</dbReference>
<dbReference type="PANTHER" id="PTHR34148:SF1">
    <property type="entry name" value="ADENOSYLCOBINAMIDE-GDP RIBAZOLETRANSFERASE"/>
    <property type="match status" value="1"/>
</dbReference>
<dbReference type="Pfam" id="PF02654">
    <property type="entry name" value="CobS"/>
    <property type="match status" value="1"/>
</dbReference>
<accession>A9L3D9</accession>
<protein>
    <recommendedName>
        <fullName evidence="1">Adenosylcobinamide-GDP ribazoletransferase</fullName>
        <ecNumber evidence="1">2.7.8.26</ecNumber>
    </recommendedName>
    <alternativeName>
        <fullName evidence="1">Cobalamin synthase</fullName>
    </alternativeName>
    <alternativeName>
        <fullName evidence="1">Cobalamin-5'-phosphate synthase</fullName>
    </alternativeName>
</protein>
<feature type="chain" id="PRO_1000083267" description="Adenosylcobinamide-GDP ribazoletransferase">
    <location>
        <begin position="1"/>
        <end position="262"/>
    </location>
</feature>
<feature type="transmembrane region" description="Helical" evidence="1">
    <location>
        <begin position="43"/>
        <end position="63"/>
    </location>
</feature>
<feature type="transmembrane region" description="Helical" evidence="1">
    <location>
        <begin position="66"/>
        <end position="86"/>
    </location>
</feature>
<feature type="transmembrane region" description="Helical" evidence="1">
    <location>
        <begin position="120"/>
        <end position="140"/>
    </location>
</feature>
<feature type="transmembrane region" description="Helical" evidence="1">
    <location>
        <begin position="146"/>
        <end position="166"/>
    </location>
</feature>
<feature type="transmembrane region" description="Helical" evidence="1">
    <location>
        <begin position="191"/>
        <end position="211"/>
    </location>
</feature>
<feature type="transmembrane region" description="Helical" evidence="1">
    <location>
        <begin position="242"/>
        <end position="262"/>
    </location>
</feature>
<proteinExistence type="inferred from homology"/>
<evidence type="ECO:0000255" key="1">
    <source>
        <dbReference type="HAMAP-Rule" id="MF_00719"/>
    </source>
</evidence>